<comment type="function">
    <text evidence="1">Required for formate dehydrogenase (FDH) activity. Acts as a sulfur carrier protein that transfers sulfur from IscS to the molybdenum cofactor prior to its insertion into FDH.</text>
</comment>
<comment type="subcellular location">
    <subcellularLocation>
        <location evidence="1">Cytoplasm</location>
    </subcellularLocation>
</comment>
<comment type="similarity">
    <text evidence="1">Belongs to the FdhD family.</text>
</comment>
<protein>
    <recommendedName>
        <fullName evidence="1">Sulfur carrier protein FdhD</fullName>
    </recommendedName>
</protein>
<dbReference type="EMBL" id="CP000736">
    <property type="protein sequence ID" value="ABR53172.1"/>
    <property type="molecule type" value="Genomic_DNA"/>
</dbReference>
<dbReference type="SMR" id="A6U404"/>
<dbReference type="KEGG" id="sah:SaurJH1_2347"/>
<dbReference type="HOGENOM" id="CLU_056887_4_1_9"/>
<dbReference type="GO" id="GO:0005737">
    <property type="term" value="C:cytoplasm"/>
    <property type="evidence" value="ECO:0007669"/>
    <property type="project" value="UniProtKB-SubCell"/>
</dbReference>
<dbReference type="GO" id="GO:0097163">
    <property type="term" value="F:sulfur carrier activity"/>
    <property type="evidence" value="ECO:0007669"/>
    <property type="project" value="UniProtKB-UniRule"/>
</dbReference>
<dbReference type="GO" id="GO:0016783">
    <property type="term" value="F:sulfurtransferase activity"/>
    <property type="evidence" value="ECO:0007669"/>
    <property type="project" value="InterPro"/>
</dbReference>
<dbReference type="GO" id="GO:0006777">
    <property type="term" value="P:Mo-molybdopterin cofactor biosynthetic process"/>
    <property type="evidence" value="ECO:0007669"/>
    <property type="project" value="UniProtKB-UniRule"/>
</dbReference>
<dbReference type="Gene3D" id="3.10.20.10">
    <property type="match status" value="1"/>
</dbReference>
<dbReference type="Gene3D" id="3.40.140.10">
    <property type="entry name" value="Cytidine Deaminase, domain 2"/>
    <property type="match status" value="1"/>
</dbReference>
<dbReference type="HAMAP" id="MF_00187">
    <property type="entry name" value="FdhD"/>
    <property type="match status" value="1"/>
</dbReference>
<dbReference type="InterPro" id="IPR016193">
    <property type="entry name" value="Cytidine_deaminase-like"/>
</dbReference>
<dbReference type="InterPro" id="IPR003786">
    <property type="entry name" value="FdhD"/>
</dbReference>
<dbReference type="NCBIfam" id="TIGR00129">
    <property type="entry name" value="fdhD_narQ"/>
    <property type="match status" value="1"/>
</dbReference>
<dbReference type="PANTHER" id="PTHR30592">
    <property type="entry name" value="FORMATE DEHYDROGENASE"/>
    <property type="match status" value="1"/>
</dbReference>
<dbReference type="PANTHER" id="PTHR30592:SF1">
    <property type="entry name" value="SULFUR CARRIER PROTEIN FDHD"/>
    <property type="match status" value="1"/>
</dbReference>
<dbReference type="Pfam" id="PF02634">
    <property type="entry name" value="FdhD-NarQ"/>
    <property type="match status" value="1"/>
</dbReference>
<dbReference type="PIRSF" id="PIRSF015626">
    <property type="entry name" value="FdhD"/>
    <property type="match status" value="1"/>
</dbReference>
<dbReference type="SUPFAM" id="SSF53927">
    <property type="entry name" value="Cytidine deaminase-like"/>
    <property type="match status" value="1"/>
</dbReference>
<accession>A6U404</accession>
<reference key="1">
    <citation type="submission" date="2007-06" db="EMBL/GenBank/DDBJ databases">
        <title>Complete sequence of chromosome of Staphylococcus aureus subsp. aureus JH1.</title>
        <authorList>
            <consortium name="US DOE Joint Genome Institute"/>
            <person name="Copeland A."/>
            <person name="Lucas S."/>
            <person name="Lapidus A."/>
            <person name="Barry K."/>
            <person name="Detter J.C."/>
            <person name="Glavina del Rio T."/>
            <person name="Hammon N."/>
            <person name="Israni S."/>
            <person name="Dalin E."/>
            <person name="Tice H."/>
            <person name="Pitluck S."/>
            <person name="Chain P."/>
            <person name="Malfatti S."/>
            <person name="Shin M."/>
            <person name="Vergez L."/>
            <person name="Schmutz J."/>
            <person name="Larimer F."/>
            <person name="Land M."/>
            <person name="Hauser L."/>
            <person name="Kyrpides N."/>
            <person name="Ivanova N."/>
            <person name="Tomasz A."/>
            <person name="Richardson P."/>
        </authorList>
    </citation>
    <scope>NUCLEOTIDE SEQUENCE [LARGE SCALE GENOMIC DNA]</scope>
    <source>
        <strain>JH1</strain>
    </source>
</reference>
<sequence>MNKDVSLGQPIVRYEDGKLFNTTDQYVTEFPLTIMVNGEEFATVICSPTNLEELVIGFLASEGAILKRDELKSVLIDDSKGFAHVELNKDLGDRFQYSTKRMIASCCGKSREFYFQNDAAIAKTSMSKITLTPIQIINMMTRLQSASHIYQETGGLHNAAISDGLTFFVHRQDIGRHNALDKLYGFCIQRHITVRDKVLIFSGRISSEILIKAAKIGVGVILSKSAPTTLAVTLANDLNITAVGFIRNGGFNIYSHPERIIDSEQ</sequence>
<organism>
    <name type="scientific">Staphylococcus aureus (strain JH1)</name>
    <dbReference type="NCBI Taxonomy" id="359787"/>
    <lineage>
        <taxon>Bacteria</taxon>
        <taxon>Bacillati</taxon>
        <taxon>Bacillota</taxon>
        <taxon>Bacilli</taxon>
        <taxon>Bacillales</taxon>
        <taxon>Staphylococcaceae</taxon>
        <taxon>Staphylococcus</taxon>
    </lineage>
</organism>
<name>FDHD_STAA2</name>
<feature type="chain" id="PRO_1000077437" description="Sulfur carrier protein FdhD">
    <location>
        <begin position="1"/>
        <end position="265"/>
    </location>
</feature>
<feature type="active site" description="Cysteine persulfide intermediate" evidence="1">
    <location>
        <position position="107"/>
    </location>
</feature>
<gene>
    <name evidence="1" type="primary">fdhD</name>
    <name type="ordered locus">SaurJH1_2347</name>
</gene>
<evidence type="ECO:0000255" key="1">
    <source>
        <dbReference type="HAMAP-Rule" id="MF_00187"/>
    </source>
</evidence>
<keyword id="KW-0963">Cytoplasm</keyword>
<keyword id="KW-0501">Molybdenum cofactor biosynthesis</keyword>
<proteinExistence type="inferred from homology"/>